<evidence type="ECO:0000250" key="1"/>
<evidence type="ECO:0000255" key="2"/>
<evidence type="ECO:0000256" key="3">
    <source>
        <dbReference type="SAM" id="MobiDB-lite"/>
    </source>
</evidence>
<evidence type="ECO:0000305" key="4"/>
<accession>C5M3V6</accession>
<sequence length="567" mass="62754">MIRIAARNANRSTAIRSISTTSIRLNTTQKVVVTPPPVATEGELPPPQPKVTPPKATPPPPPKTKRFSLFGFLLKTTLLASVVYGGTLYAATKNDKVMDFVVDNRLPYHEELLELIETGSIDDLQQGLDQLKSKFGSVKLPSKEEIDELAQKLEHKGEDIIKETKKKFTATRTGTDLTPSEQLQKGVEIESVKKDVPHLPLIELNSELGSSVDETVKQTIASFNNFIQTIDASTLASKNDKLIASINFSISQLASKLNGLTKSFDEELQKKLKVSQTELFSSFTKKELELTENLLHQFTTEKQQLEAKLNEKLNQEIQASRTAISQAATNAVSMVRIEQTKNFEKLVTEKLNEERNGRLANLDKLNDRLTELEKFAEGFETQIVSNHKKALIQQAVSKLKSLLLAPAANEKPKSIKPYVDELSKIAADDEVLKLALKDLTPLLSNESTHSILTNAQLLSRWEQLAPELRSASLLPPNAGLLGHLASIVFSKLLLPVKGVKQDGKDIESVIGRVESSLARGELDVAVEEAANLKGWSRKLANDWVVEGRKRLEVEFLLGLIESESKII</sequence>
<organism>
    <name type="scientific">Candida tropicalis (strain ATCC MYA-3404 / T1)</name>
    <name type="common">Yeast</name>
    <dbReference type="NCBI Taxonomy" id="294747"/>
    <lineage>
        <taxon>Eukaryota</taxon>
        <taxon>Fungi</taxon>
        <taxon>Dikarya</taxon>
        <taxon>Ascomycota</taxon>
        <taxon>Saccharomycotina</taxon>
        <taxon>Pichiomycetes</taxon>
        <taxon>Debaryomycetaceae</taxon>
        <taxon>Candida/Lodderomyces clade</taxon>
        <taxon>Candida</taxon>
    </lineage>
</organism>
<dbReference type="EMBL" id="GG692395">
    <property type="protein sequence ID" value="EER36006.1"/>
    <property type="molecule type" value="Genomic_DNA"/>
</dbReference>
<dbReference type="RefSeq" id="XP_002545964.1">
    <property type="nucleotide sequence ID" value="XM_002545918.1"/>
</dbReference>
<dbReference type="SMR" id="C5M3V6"/>
<dbReference type="STRING" id="294747.C5M3V6"/>
<dbReference type="EnsemblFungi" id="CTRG_00745-t43_1">
    <property type="protein sequence ID" value="CTRG_00745-t43_1-p1"/>
    <property type="gene ID" value="CTRG_00745"/>
</dbReference>
<dbReference type="GeneID" id="8297270"/>
<dbReference type="KEGG" id="ctp:CTRG_00745"/>
<dbReference type="VEuPathDB" id="FungiDB:CTRG_00745"/>
<dbReference type="eggNOG" id="KOG1854">
    <property type="taxonomic scope" value="Eukaryota"/>
</dbReference>
<dbReference type="HOGENOM" id="CLU_008024_2_0_1"/>
<dbReference type="OrthoDB" id="10261039at2759"/>
<dbReference type="Proteomes" id="UP000002037">
    <property type="component" value="Unassembled WGS sequence"/>
</dbReference>
<dbReference type="GO" id="GO:0061617">
    <property type="term" value="C:MICOS complex"/>
    <property type="evidence" value="ECO:0007669"/>
    <property type="project" value="TreeGrafter"/>
</dbReference>
<dbReference type="GO" id="GO:0042407">
    <property type="term" value="P:cristae formation"/>
    <property type="evidence" value="ECO:0007669"/>
    <property type="project" value="TreeGrafter"/>
</dbReference>
<dbReference type="InterPro" id="IPR019133">
    <property type="entry name" value="MIC60"/>
</dbReference>
<dbReference type="PANTHER" id="PTHR15415:SF7">
    <property type="entry name" value="MICOS COMPLEX SUBUNIT MIC60"/>
    <property type="match status" value="1"/>
</dbReference>
<dbReference type="PANTHER" id="PTHR15415">
    <property type="entry name" value="MITOFILIN"/>
    <property type="match status" value="1"/>
</dbReference>
<dbReference type="Pfam" id="PF09731">
    <property type="entry name" value="Mitofilin"/>
    <property type="match status" value="2"/>
</dbReference>
<comment type="function">
    <text evidence="1">Component of the MICOS complex, a large protein complex of the mitochondrial inner membrane that plays crucial roles in the maintenance of crista junctions, inner membrane architecture, and formation of contact sites to the outer membrane. Plays a role in keeping cristae membranes connected to the inner boundary membrane. Also promotes protein import via the mitochondrial intermembrane space assembly (MIA) pathway (By similarity).</text>
</comment>
<comment type="subunit">
    <text evidence="1">Component of the mitochondrial contact site and cristae organizing system (MICOS) complex.</text>
</comment>
<comment type="subcellular location">
    <subcellularLocation>
        <location evidence="1">Mitochondrion inner membrane</location>
        <topology evidence="1">Single-pass membrane protein</topology>
    </subcellularLocation>
</comment>
<comment type="similarity">
    <text evidence="4">Belongs to the MICOS complex subunit Mic60 family.</text>
</comment>
<feature type="transit peptide" description="Mitochondrion" evidence="2">
    <location>
        <begin position="1"/>
        <end position="25"/>
    </location>
</feature>
<feature type="chain" id="PRO_0000406652" description="MICOS complex subunit MIC60">
    <location>
        <begin position="26"/>
        <end position="567"/>
    </location>
</feature>
<feature type="topological domain" description="Mitochondrial matrix" evidence="2">
    <location>
        <begin position="26"/>
        <end position="68"/>
    </location>
</feature>
<feature type="transmembrane region" description="Helical" evidence="2">
    <location>
        <begin position="69"/>
        <end position="91"/>
    </location>
</feature>
<feature type="topological domain" description="Mitochondrial intermembrane" evidence="2">
    <location>
        <begin position="92"/>
        <end position="567"/>
    </location>
</feature>
<feature type="region of interest" description="Disordered" evidence="3">
    <location>
        <begin position="36"/>
        <end position="63"/>
    </location>
</feature>
<feature type="coiled-coil region" evidence="2">
    <location>
        <begin position="284"/>
        <end position="383"/>
    </location>
</feature>
<feature type="compositionally biased region" description="Pro residues" evidence="3">
    <location>
        <begin position="36"/>
        <end position="62"/>
    </location>
</feature>
<reference key="1">
    <citation type="journal article" date="2009" name="Nature">
        <title>Evolution of pathogenicity and sexual reproduction in eight Candida genomes.</title>
        <authorList>
            <person name="Butler G."/>
            <person name="Rasmussen M.D."/>
            <person name="Lin M.F."/>
            <person name="Santos M.A.S."/>
            <person name="Sakthikumar S."/>
            <person name="Munro C.A."/>
            <person name="Rheinbay E."/>
            <person name="Grabherr M."/>
            <person name="Forche A."/>
            <person name="Reedy J.L."/>
            <person name="Agrafioti I."/>
            <person name="Arnaud M.B."/>
            <person name="Bates S."/>
            <person name="Brown A.J.P."/>
            <person name="Brunke S."/>
            <person name="Costanzo M.C."/>
            <person name="Fitzpatrick D.A."/>
            <person name="de Groot P.W.J."/>
            <person name="Harris D."/>
            <person name="Hoyer L.L."/>
            <person name="Hube B."/>
            <person name="Klis F.M."/>
            <person name="Kodira C."/>
            <person name="Lennard N."/>
            <person name="Logue M.E."/>
            <person name="Martin R."/>
            <person name="Neiman A.M."/>
            <person name="Nikolaou E."/>
            <person name="Quail M.A."/>
            <person name="Quinn J."/>
            <person name="Santos M.C."/>
            <person name="Schmitzberger F.F."/>
            <person name="Sherlock G."/>
            <person name="Shah P."/>
            <person name="Silverstein K.A.T."/>
            <person name="Skrzypek M.S."/>
            <person name="Soll D."/>
            <person name="Staggs R."/>
            <person name="Stansfield I."/>
            <person name="Stumpf M.P.H."/>
            <person name="Sudbery P.E."/>
            <person name="Srikantha T."/>
            <person name="Zeng Q."/>
            <person name="Berman J."/>
            <person name="Berriman M."/>
            <person name="Heitman J."/>
            <person name="Gow N.A.R."/>
            <person name="Lorenz M.C."/>
            <person name="Birren B.W."/>
            <person name="Kellis M."/>
            <person name="Cuomo C.A."/>
        </authorList>
    </citation>
    <scope>NUCLEOTIDE SEQUENCE [LARGE SCALE GENOMIC DNA]</scope>
    <source>
        <strain>ATCC MYA-3404 / T1</strain>
    </source>
</reference>
<gene>
    <name type="primary">MIC60</name>
    <name type="ORF">CTRG_00745</name>
</gene>
<keyword id="KW-0175">Coiled coil</keyword>
<keyword id="KW-0472">Membrane</keyword>
<keyword id="KW-0496">Mitochondrion</keyword>
<keyword id="KW-0999">Mitochondrion inner membrane</keyword>
<keyword id="KW-1185">Reference proteome</keyword>
<keyword id="KW-0809">Transit peptide</keyword>
<keyword id="KW-0812">Transmembrane</keyword>
<keyword id="KW-1133">Transmembrane helix</keyword>
<protein>
    <recommendedName>
        <fullName>MICOS complex subunit MIC60</fullName>
    </recommendedName>
    <alternativeName>
        <fullName>Mitofilin</fullName>
    </alternativeName>
</protein>
<proteinExistence type="inferred from homology"/>
<name>MIC60_CANTT</name>